<organism>
    <name type="scientific">Raphicerus melanotis</name>
    <name type="common">Cape grysbok</name>
    <dbReference type="NCBI Taxonomy" id="66435"/>
    <lineage>
        <taxon>Eukaryota</taxon>
        <taxon>Metazoa</taxon>
        <taxon>Chordata</taxon>
        <taxon>Craniata</taxon>
        <taxon>Vertebrata</taxon>
        <taxon>Euteleostomi</taxon>
        <taxon>Mammalia</taxon>
        <taxon>Eutheria</taxon>
        <taxon>Laurasiatheria</taxon>
        <taxon>Artiodactyla</taxon>
        <taxon>Ruminantia</taxon>
        <taxon>Pecora</taxon>
        <taxon>Bovidae</taxon>
        <taxon>Antilopinae</taxon>
        <taxon>Raphicerus</taxon>
    </lineage>
</organism>
<gene>
    <name type="primary">MT-CYB</name>
    <name type="synonym">COB</name>
    <name type="synonym">CYTB</name>
    <name type="synonym">MTCYB</name>
</gene>
<sequence>MTNIRKTHPLMEIVNNAFIDLPTPSNISSWWNFGSLLGICLILRILTGLFLAMHYTADTATAFSSVTHICRDVNYGWIIRYMHANGASMFSICLFMHVGRGLYYGSYTFLETWNIGVILLFATMATAFMGYVLPWGQMSFWGATVITNLLSAIPYIGTNLVEWIWGGFSVDKATLTRFFAFHFSSPFIIAALAMVHLLFLHETGSNNPTGSLSDMDKIPFHPYYTIKDILGALLLILTLMLLVLFAPDLLGDPDNYTPANPLNTPPHIKPEWYFLFAYAILRSIPNKLGGVLALVLSILILVLMPLLHTSKQRSMMFRPISQCLFWILVADLLTLTWIGGEPVEHPYIIIGQLASITYFTLILVLMPIASTIENNLLKW</sequence>
<feature type="chain" id="PRO_0000254855" description="Cytochrome b">
    <location>
        <begin position="1"/>
        <end position="379"/>
    </location>
</feature>
<feature type="transmembrane region" description="Helical" evidence="2">
    <location>
        <begin position="33"/>
        <end position="53"/>
    </location>
</feature>
<feature type="transmembrane region" description="Helical" evidence="2">
    <location>
        <begin position="77"/>
        <end position="98"/>
    </location>
</feature>
<feature type="transmembrane region" description="Helical" evidence="2">
    <location>
        <begin position="113"/>
        <end position="133"/>
    </location>
</feature>
<feature type="transmembrane region" description="Helical" evidence="2">
    <location>
        <begin position="178"/>
        <end position="198"/>
    </location>
</feature>
<feature type="transmembrane region" description="Helical" evidence="2">
    <location>
        <begin position="226"/>
        <end position="246"/>
    </location>
</feature>
<feature type="transmembrane region" description="Helical" evidence="2">
    <location>
        <begin position="288"/>
        <end position="308"/>
    </location>
</feature>
<feature type="transmembrane region" description="Helical" evidence="2">
    <location>
        <begin position="320"/>
        <end position="340"/>
    </location>
</feature>
<feature type="transmembrane region" description="Helical" evidence="2">
    <location>
        <begin position="347"/>
        <end position="367"/>
    </location>
</feature>
<feature type="binding site" description="axial binding residue" evidence="2">
    <location>
        <position position="83"/>
    </location>
    <ligand>
        <name>heme b</name>
        <dbReference type="ChEBI" id="CHEBI:60344"/>
        <label>b562</label>
    </ligand>
    <ligandPart>
        <name>Fe</name>
        <dbReference type="ChEBI" id="CHEBI:18248"/>
    </ligandPart>
</feature>
<feature type="binding site" description="axial binding residue" evidence="2">
    <location>
        <position position="97"/>
    </location>
    <ligand>
        <name>heme b</name>
        <dbReference type="ChEBI" id="CHEBI:60344"/>
        <label>b566</label>
    </ligand>
    <ligandPart>
        <name>Fe</name>
        <dbReference type="ChEBI" id="CHEBI:18248"/>
    </ligandPart>
</feature>
<feature type="binding site" description="axial binding residue" evidence="2">
    <location>
        <position position="182"/>
    </location>
    <ligand>
        <name>heme b</name>
        <dbReference type="ChEBI" id="CHEBI:60344"/>
        <label>b562</label>
    </ligand>
    <ligandPart>
        <name>Fe</name>
        <dbReference type="ChEBI" id="CHEBI:18248"/>
    </ligandPart>
</feature>
<feature type="binding site" description="axial binding residue" evidence="2">
    <location>
        <position position="196"/>
    </location>
    <ligand>
        <name>heme b</name>
        <dbReference type="ChEBI" id="CHEBI:60344"/>
        <label>b566</label>
    </ligand>
    <ligandPart>
        <name>Fe</name>
        <dbReference type="ChEBI" id="CHEBI:18248"/>
    </ligandPart>
</feature>
<feature type="binding site" evidence="2">
    <location>
        <position position="201"/>
    </location>
    <ligand>
        <name>a ubiquinone</name>
        <dbReference type="ChEBI" id="CHEBI:16389"/>
    </ligand>
</feature>
<evidence type="ECO:0000250" key="1"/>
<evidence type="ECO:0000250" key="2">
    <source>
        <dbReference type="UniProtKB" id="P00157"/>
    </source>
</evidence>
<evidence type="ECO:0000255" key="3">
    <source>
        <dbReference type="PROSITE-ProRule" id="PRU00967"/>
    </source>
</evidence>
<evidence type="ECO:0000255" key="4">
    <source>
        <dbReference type="PROSITE-ProRule" id="PRU00968"/>
    </source>
</evidence>
<proteinExistence type="inferred from homology"/>
<keyword id="KW-0249">Electron transport</keyword>
<keyword id="KW-0349">Heme</keyword>
<keyword id="KW-0408">Iron</keyword>
<keyword id="KW-0472">Membrane</keyword>
<keyword id="KW-0479">Metal-binding</keyword>
<keyword id="KW-0496">Mitochondrion</keyword>
<keyword id="KW-0999">Mitochondrion inner membrane</keyword>
<keyword id="KW-0679">Respiratory chain</keyword>
<keyword id="KW-0812">Transmembrane</keyword>
<keyword id="KW-1133">Transmembrane helix</keyword>
<keyword id="KW-0813">Transport</keyword>
<keyword id="KW-0830">Ubiquinone</keyword>
<name>CYB_RAPME</name>
<geneLocation type="mitochondrion"/>
<comment type="function">
    <text evidence="2">Component of the ubiquinol-cytochrome c reductase complex (complex III or cytochrome b-c1 complex) that is part of the mitochondrial respiratory chain. The b-c1 complex mediates electron transfer from ubiquinol to cytochrome c. Contributes to the generation of a proton gradient across the mitochondrial membrane that is then used for ATP synthesis.</text>
</comment>
<comment type="cofactor">
    <cofactor evidence="2">
        <name>heme b</name>
        <dbReference type="ChEBI" id="CHEBI:60344"/>
    </cofactor>
    <text evidence="2">Binds 2 heme b groups non-covalently.</text>
</comment>
<comment type="subunit">
    <text evidence="2">The cytochrome bc1 complex contains 11 subunits: 3 respiratory subunits (MT-CYB, CYC1 and UQCRFS1), 2 core proteins (UQCRC1 and UQCRC2) and 6 low-molecular weight proteins (UQCRH/QCR6, UQCRB/QCR7, UQCRQ/QCR8, UQCR10/QCR9, UQCR11/QCR10 and a cleavage product of UQCRFS1). This cytochrome bc1 complex then forms a dimer.</text>
</comment>
<comment type="subcellular location">
    <subcellularLocation>
        <location evidence="2">Mitochondrion inner membrane</location>
        <topology evidence="2">Multi-pass membrane protein</topology>
    </subcellularLocation>
</comment>
<comment type="miscellaneous">
    <text evidence="1">Heme 1 (or BL or b562) is low-potential and absorbs at about 562 nm, and heme 2 (or BH or b566) is high-potential and absorbs at about 566 nm.</text>
</comment>
<comment type="similarity">
    <text evidence="3 4">Belongs to the cytochrome b family.</text>
</comment>
<comment type="caution">
    <text evidence="2">The full-length protein contains only eight transmembrane helices, not nine as predicted by bioinformatics tools.</text>
</comment>
<reference key="1">
    <citation type="journal article" date="1999" name="Mol. Phylogenet. Evol.">
        <title>Cytochrome b phylogeny of the family bovidae: resolution within the alcelaphini, antilopini, neotragini, and tragelaphini.</title>
        <authorList>
            <person name="Matthee C.A."/>
            <person name="Robinson T.J."/>
        </authorList>
    </citation>
    <scope>NUCLEOTIDE SEQUENCE [GENOMIC DNA]</scope>
    <source>
        <strain>Isolate Cape</strain>
    </source>
</reference>
<dbReference type="EMBL" id="AF022053">
    <property type="protein sequence ID" value="AAD13487.1"/>
    <property type="molecule type" value="Genomic_DNA"/>
</dbReference>
<dbReference type="SMR" id="Q9TGH8"/>
<dbReference type="GO" id="GO:0005743">
    <property type="term" value="C:mitochondrial inner membrane"/>
    <property type="evidence" value="ECO:0007669"/>
    <property type="project" value="UniProtKB-SubCell"/>
</dbReference>
<dbReference type="GO" id="GO:0045275">
    <property type="term" value="C:respiratory chain complex III"/>
    <property type="evidence" value="ECO:0007669"/>
    <property type="project" value="InterPro"/>
</dbReference>
<dbReference type="GO" id="GO:0046872">
    <property type="term" value="F:metal ion binding"/>
    <property type="evidence" value="ECO:0007669"/>
    <property type="project" value="UniProtKB-KW"/>
</dbReference>
<dbReference type="GO" id="GO:0008121">
    <property type="term" value="F:ubiquinol-cytochrome-c reductase activity"/>
    <property type="evidence" value="ECO:0007669"/>
    <property type="project" value="InterPro"/>
</dbReference>
<dbReference type="GO" id="GO:0006122">
    <property type="term" value="P:mitochondrial electron transport, ubiquinol to cytochrome c"/>
    <property type="evidence" value="ECO:0007669"/>
    <property type="project" value="TreeGrafter"/>
</dbReference>
<dbReference type="CDD" id="cd00290">
    <property type="entry name" value="cytochrome_b_C"/>
    <property type="match status" value="1"/>
</dbReference>
<dbReference type="CDD" id="cd00284">
    <property type="entry name" value="Cytochrome_b_N"/>
    <property type="match status" value="1"/>
</dbReference>
<dbReference type="FunFam" id="1.20.810.10:FF:000002">
    <property type="entry name" value="Cytochrome b"/>
    <property type="match status" value="1"/>
</dbReference>
<dbReference type="Gene3D" id="1.20.810.10">
    <property type="entry name" value="Cytochrome Bc1 Complex, Chain C"/>
    <property type="match status" value="1"/>
</dbReference>
<dbReference type="InterPro" id="IPR005798">
    <property type="entry name" value="Cyt_b/b6_C"/>
</dbReference>
<dbReference type="InterPro" id="IPR036150">
    <property type="entry name" value="Cyt_b/b6_C_sf"/>
</dbReference>
<dbReference type="InterPro" id="IPR005797">
    <property type="entry name" value="Cyt_b/b6_N"/>
</dbReference>
<dbReference type="InterPro" id="IPR027387">
    <property type="entry name" value="Cytb/b6-like_sf"/>
</dbReference>
<dbReference type="InterPro" id="IPR030689">
    <property type="entry name" value="Cytochrome_b"/>
</dbReference>
<dbReference type="InterPro" id="IPR048260">
    <property type="entry name" value="Cytochrome_b_C_euk/bac"/>
</dbReference>
<dbReference type="InterPro" id="IPR048259">
    <property type="entry name" value="Cytochrome_b_N_euk/bac"/>
</dbReference>
<dbReference type="InterPro" id="IPR016174">
    <property type="entry name" value="Di-haem_cyt_TM"/>
</dbReference>
<dbReference type="PANTHER" id="PTHR19271">
    <property type="entry name" value="CYTOCHROME B"/>
    <property type="match status" value="1"/>
</dbReference>
<dbReference type="PANTHER" id="PTHR19271:SF16">
    <property type="entry name" value="CYTOCHROME B"/>
    <property type="match status" value="1"/>
</dbReference>
<dbReference type="Pfam" id="PF00032">
    <property type="entry name" value="Cytochrom_B_C"/>
    <property type="match status" value="1"/>
</dbReference>
<dbReference type="Pfam" id="PF00033">
    <property type="entry name" value="Cytochrome_B"/>
    <property type="match status" value="1"/>
</dbReference>
<dbReference type="PIRSF" id="PIRSF038885">
    <property type="entry name" value="COB"/>
    <property type="match status" value="1"/>
</dbReference>
<dbReference type="SUPFAM" id="SSF81648">
    <property type="entry name" value="a domain/subunit of cytochrome bc1 complex (Ubiquinol-cytochrome c reductase)"/>
    <property type="match status" value="1"/>
</dbReference>
<dbReference type="SUPFAM" id="SSF81342">
    <property type="entry name" value="Transmembrane di-heme cytochromes"/>
    <property type="match status" value="1"/>
</dbReference>
<dbReference type="PROSITE" id="PS51003">
    <property type="entry name" value="CYTB_CTER"/>
    <property type="match status" value="1"/>
</dbReference>
<dbReference type="PROSITE" id="PS51002">
    <property type="entry name" value="CYTB_NTER"/>
    <property type="match status" value="1"/>
</dbReference>
<accession>Q9TGH8</accession>
<protein>
    <recommendedName>
        <fullName>Cytochrome b</fullName>
    </recommendedName>
    <alternativeName>
        <fullName>Complex III subunit 3</fullName>
    </alternativeName>
    <alternativeName>
        <fullName>Complex III subunit III</fullName>
    </alternativeName>
    <alternativeName>
        <fullName>Cytochrome b-c1 complex subunit 3</fullName>
    </alternativeName>
    <alternativeName>
        <fullName>Ubiquinol-cytochrome-c reductase complex cytochrome b subunit</fullName>
    </alternativeName>
</protein>